<proteinExistence type="inferred from homology"/>
<evidence type="ECO:0000255" key="1">
    <source>
        <dbReference type="HAMAP-Rule" id="MF_00401"/>
    </source>
</evidence>
<sequence length="217" mass="24887">MAVIGEKFPDVELLTTHGKLKLPEHFIEAGKWFVLFSHPGDFTPVCTTEFVAFQKRYDQFRELNTELIGLSIDQVFSHIKWVEWIKEKLDVDIEFPIIADERGDLAVKLGMISPFKGSNTVRAVFVVDATGTIRAIIYYPQEVGRNMDEVVRLVKALQTADKGYATPADWPNNELLKEKVIIPPAKDMKTRAERLEACKRGDISGYDWWFCYTNLKE</sequence>
<keyword id="KW-0049">Antioxidant</keyword>
<keyword id="KW-0963">Cytoplasm</keyword>
<keyword id="KW-1015">Disulfide bond</keyword>
<keyword id="KW-0560">Oxidoreductase</keyword>
<keyword id="KW-0575">Peroxidase</keyword>
<keyword id="KW-0676">Redox-active center</keyword>
<accession>A6UPH7</accession>
<gene>
    <name type="ordered locus">Mevan_0492</name>
</gene>
<name>TDXH_METVS</name>
<organism>
    <name type="scientific">Methanococcus vannielii (strain ATCC 35089 / DSM 1224 / JCM 13029 / OCM 148 / SB)</name>
    <dbReference type="NCBI Taxonomy" id="406327"/>
    <lineage>
        <taxon>Archaea</taxon>
        <taxon>Methanobacteriati</taxon>
        <taxon>Methanobacteriota</taxon>
        <taxon>Methanomada group</taxon>
        <taxon>Methanococci</taxon>
        <taxon>Methanococcales</taxon>
        <taxon>Methanococcaceae</taxon>
        <taxon>Methanococcus</taxon>
    </lineage>
</organism>
<protein>
    <recommendedName>
        <fullName evidence="1">Peroxiredoxin</fullName>
        <ecNumber evidence="1">1.11.1.24</ecNumber>
    </recommendedName>
    <alternativeName>
        <fullName evidence="1">Thioredoxin peroxidase</fullName>
    </alternativeName>
    <alternativeName>
        <fullName evidence="1">Thioredoxin-dependent peroxiredoxin</fullName>
    </alternativeName>
</protein>
<comment type="function">
    <text evidence="1">Thiol-specific peroxidase that catalyzes the reduction of hydrogen peroxide and organic hydroperoxides to water and alcohols, respectively. Plays a role in cell protection against oxidative stress by detoxifying peroxides.</text>
</comment>
<comment type="catalytic activity">
    <reaction evidence="1">
        <text>a hydroperoxide + [thioredoxin]-dithiol = an alcohol + [thioredoxin]-disulfide + H2O</text>
        <dbReference type="Rhea" id="RHEA:62620"/>
        <dbReference type="Rhea" id="RHEA-COMP:10698"/>
        <dbReference type="Rhea" id="RHEA-COMP:10700"/>
        <dbReference type="ChEBI" id="CHEBI:15377"/>
        <dbReference type="ChEBI" id="CHEBI:29950"/>
        <dbReference type="ChEBI" id="CHEBI:30879"/>
        <dbReference type="ChEBI" id="CHEBI:35924"/>
        <dbReference type="ChEBI" id="CHEBI:50058"/>
        <dbReference type="EC" id="1.11.1.24"/>
    </reaction>
</comment>
<comment type="subunit">
    <text evidence="1">Homodecamer. Pentamer of dimers that assemble into a ring structure.</text>
</comment>
<comment type="subcellular location">
    <subcellularLocation>
        <location evidence="1">Cytoplasm</location>
    </subcellularLocation>
</comment>
<comment type="miscellaneous">
    <text evidence="1">The active site is a conserved redox-active cysteine residue, the peroxidatic cysteine (C(P)), which makes the nucleophilic attack on the peroxide substrate. The peroxide oxidizes the C(P)-SH to cysteine sulfenic acid (C(P)-SOH), which then reacts with another cysteine residue, the resolving cysteine (C(R)), to form a disulfide bridge. The disulfide is subsequently reduced by an appropriate electron donor to complete the catalytic cycle. Although the primary sequence of this enzyme is similar to those of the 1-Cys Prx6 enzymes, its catalytic properties resemble those of the typical 2-Cys Prxs and C(R) is provided by the other dimeric subunit to form an intersubunit disulfide. The disulfide is subsequently reduced by thioredoxin.</text>
</comment>
<comment type="similarity">
    <text evidence="1">Belongs to the peroxiredoxin family. Prx6 subfamily.</text>
</comment>
<dbReference type="EC" id="1.11.1.24" evidence="1"/>
<dbReference type="EMBL" id="CP000742">
    <property type="protein sequence ID" value="ABR54399.1"/>
    <property type="molecule type" value="Genomic_DNA"/>
</dbReference>
<dbReference type="RefSeq" id="WP_011972302.1">
    <property type="nucleotide sequence ID" value="NC_009634.1"/>
</dbReference>
<dbReference type="SMR" id="A6UPH7"/>
<dbReference type="STRING" id="406327.Mevan_0492"/>
<dbReference type="GeneID" id="5325547"/>
<dbReference type="KEGG" id="mvn:Mevan_0492"/>
<dbReference type="eggNOG" id="arCOG00312">
    <property type="taxonomic scope" value="Archaea"/>
</dbReference>
<dbReference type="HOGENOM" id="CLU_042529_4_4_2"/>
<dbReference type="OrthoDB" id="6924at2157"/>
<dbReference type="Proteomes" id="UP000001107">
    <property type="component" value="Chromosome"/>
</dbReference>
<dbReference type="GO" id="GO:0005829">
    <property type="term" value="C:cytosol"/>
    <property type="evidence" value="ECO:0007669"/>
    <property type="project" value="TreeGrafter"/>
</dbReference>
<dbReference type="GO" id="GO:0008379">
    <property type="term" value="F:thioredoxin peroxidase activity"/>
    <property type="evidence" value="ECO:0007669"/>
    <property type="project" value="TreeGrafter"/>
</dbReference>
<dbReference type="GO" id="GO:0045454">
    <property type="term" value="P:cell redox homeostasis"/>
    <property type="evidence" value="ECO:0007669"/>
    <property type="project" value="TreeGrafter"/>
</dbReference>
<dbReference type="GO" id="GO:0033554">
    <property type="term" value="P:cellular response to stress"/>
    <property type="evidence" value="ECO:0007669"/>
    <property type="project" value="TreeGrafter"/>
</dbReference>
<dbReference type="GO" id="GO:0042744">
    <property type="term" value="P:hydrogen peroxide catabolic process"/>
    <property type="evidence" value="ECO:0007669"/>
    <property type="project" value="TreeGrafter"/>
</dbReference>
<dbReference type="GO" id="GO:0006979">
    <property type="term" value="P:response to oxidative stress"/>
    <property type="evidence" value="ECO:0007669"/>
    <property type="project" value="TreeGrafter"/>
</dbReference>
<dbReference type="CDD" id="cd03016">
    <property type="entry name" value="PRX_1cys"/>
    <property type="match status" value="1"/>
</dbReference>
<dbReference type="FunFam" id="3.30.1020.10:FF:000002">
    <property type="entry name" value="Peroxiredoxin"/>
    <property type="match status" value="1"/>
</dbReference>
<dbReference type="FunFam" id="3.40.30.10:FF:000011">
    <property type="entry name" value="Peroxiredoxin PRX1"/>
    <property type="match status" value="1"/>
</dbReference>
<dbReference type="Gene3D" id="3.30.1020.10">
    <property type="entry name" value="Antioxidant, Horf6, Chain A, domain2"/>
    <property type="match status" value="1"/>
</dbReference>
<dbReference type="Gene3D" id="3.40.30.10">
    <property type="entry name" value="Glutaredoxin"/>
    <property type="match status" value="1"/>
</dbReference>
<dbReference type="HAMAP" id="MF_00401">
    <property type="entry name" value="Peroxiredoxin"/>
    <property type="match status" value="1"/>
</dbReference>
<dbReference type="InterPro" id="IPR000866">
    <property type="entry name" value="AhpC/TSA"/>
</dbReference>
<dbReference type="InterPro" id="IPR050217">
    <property type="entry name" value="Peroxiredoxin"/>
</dbReference>
<dbReference type="InterPro" id="IPR024706">
    <property type="entry name" value="Peroxiredoxin_AhpC-typ"/>
</dbReference>
<dbReference type="InterPro" id="IPR019479">
    <property type="entry name" value="Peroxiredoxin_C"/>
</dbReference>
<dbReference type="InterPro" id="IPR022915">
    <property type="entry name" value="Peroxiredoxin_TDXH"/>
</dbReference>
<dbReference type="InterPro" id="IPR045020">
    <property type="entry name" value="PRX_1cys"/>
</dbReference>
<dbReference type="InterPro" id="IPR036249">
    <property type="entry name" value="Thioredoxin-like_sf"/>
</dbReference>
<dbReference type="InterPro" id="IPR013766">
    <property type="entry name" value="Thioredoxin_domain"/>
</dbReference>
<dbReference type="NCBIfam" id="NF009668">
    <property type="entry name" value="PRK13189.1"/>
    <property type="match status" value="1"/>
</dbReference>
<dbReference type="PANTHER" id="PTHR10681">
    <property type="entry name" value="THIOREDOXIN PEROXIDASE"/>
    <property type="match status" value="1"/>
</dbReference>
<dbReference type="PANTHER" id="PTHR10681:SF128">
    <property type="entry name" value="THIOREDOXIN-DEPENDENT PEROXIDE REDUCTASE, MITOCHONDRIAL"/>
    <property type="match status" value="1"/>
</dbReference>
<dbReference type="Pfam" id="PF10417">
    <property type="entry name" value="1-cysPrx_C"/>
    <property type="match status" value="1"/>
</dbReference>
<dbReference type="Pfam" id="PF00578">
    <property type="entry name" value="AhpC-TSA"/>
    <property type="match status" value="1"/>
</dbReference>
<dbReference type="PIRSF" id="PIRSF000239">
    <property type="entry name" value="AHPC"/>
    <property type="match status" value="1"/>
</dbReference>
<dbReference type="SUPFAM" id="SSF52833">
    <property type="entry name" value="Thioredoxin-like"/>
    <property type="match status" value="1"/>
</dbReference>
<dbReference type="PROSITE" id="PS51352">
    <property type="entry name" value="THIOREDOXIN_2"/>
    <property type="match status" value="1"/>
</dbReference>
<feature type="chain" id="PRO_1000049620" description="Peroxiredoxin">
    <location>
        <begin position="1"/>
        <end position="217"/>
    </location>
</feature>
<feature type="domain" description="Thioredoxin" evidence="1">
    <location>
        <begin position="2"/>
        <end position="159"/>
    </location>
</feature>
<feature type="active site" description="Cysteine sulfenic acid (-SOH) intermediate" evidence="1">
    <location>
        <position position="46"/>
    </location>
</feature>
<feature type="binding site" evidence="1">
    <location>
        <position position="122"/>
    </location>
    <ligand>
        <name>substrate</name>
    </ligand>
</feature>
<feature type="disulfide bond" description="Interchain (with C-211); in linked form" evidence="1">
    <location>
        <position position="46"/>
    </location>
</feature>
<feature type="disulfide bond" description="Interchain (with C-46); in linked form" evidence="1">
    <location>
        <position position="211"/>
    </location>
</feature>
<reference key="1">
    <citation type="submission" date="2007-06" db="EMBL/GenBank/DDBJ databases">
        <title>Complete sequence of Methanococcus vannielii SB.</title>
        <authorList>
            <consortium name="US DOE Joint Genome Institute"/>
            <person name="Copeland A."/>
            <person name="Lucas S."/>
            <person name="Lapidus A."/>
            <person name="Barry K."/>
            <person name="Glavina del Rio T."/>
            <person name="Dalin E."/>
            <person name="Tice H."/>
            <person name="Pitluck S."/>
            <person name="Chain P."/>
            <person name="Malfatti S."/>
            <person name="Shin M."/>
            <person name="Vergez L."/>
            <person name="Schmutz J."/>
            <person name="Larimer F."/>
            <person name="Land M."/>
            <person name="Hauser L."/>
            <person name="Kyrpides N."/>
            <person name="Anderson I."/>
            <person name="Sieprawska-Lupa M."/>
            <person name="Whitman W.B."/>
            <person name="Richardson P."/>
        </authorList>
    </citation>
    <scope>NUCLEOTIDE SEQUENCE [LARGE SCALE GENOMIC DNA]</scope>
    <source>
        <strain>ATCC 35089 / DSM 1224 / JCM 13029 / OCM 148 / SB</strain>
    </source>
</reference>